<gene>
    <name evidence="1" type="primary">nadK</name>
    <name type="ordered locus">bbp_174</name>
</gene>
<feature type="chain" id="PRO_0000120607" description="NAD kinase">
    <location>
        <begin position="1"/>
        <end position="292"/>
    </location>
</feature>
<feature type="active site" description="Proton acceptor" evidence="1">
    <location>
        <position position="73"/>
    </location>
</feature>
<feature type="binding site" evidence="1">
    <location>
        <begin position="73"/>
        <end position="74"/>
    </location>
    <ligand>
        <name>NAD(+)</name>
        <dbReference type="ChEBI" id="CHEBI:57540"/>
    </ligand>
</feature>
<feature type="binding site" evidence="1">
    <location>
        <begin position="147"/>
        <end position="148"/>
    </location>
    <ligand>
        <name>NAD(+)</name>
        <dbReference type="ChEBI" id="CHEBI:57540"/>
    </ligand>
</feature>
<feature type="binding site" evidence="1">
    <location>
        <position position="158"/>
    </location>
    <ligand>
        <name>NAD(+)</name>
        <dbReference type="ChEBI" id="CHEBI:57540"/>
    </ligand>
</feature>
<feature type="binding site" evidence="1">
    <location>
        <position position="175"/>
    </location>
    <ligand>
        <name>NAD(+)</name>
        <dbReference type="ChEBI" id="CHEBI:57540"/>
    </ligand>
</feature>
<feature type="binding site" evidence="1">
    <location>
        <position position="177"/>
    </location>
    <ligand>
        <name>NAD(+)</name>
        <dbReference type="ChEBI" id="CHEBI:57540"/>
    </ligand>
</feature>
<feature type="binding site" evidence="1">
    <location>
        <begin position="188"/>
        <end position="193"/>
    </location>
    <ligand>
        <name>NAD(+)</name>
        <dbReference type="ChEBI" id="CHEBI:57540"/>
    </ligand>
</feature>
<feature type="binding site" evidence="1">
    <location>
        <position position="248"/>
    </location>
    <ligand>
        <name>NAD(+)</name>
        <dbReference type="ChEBI" id="CHEBI:57540"/>
    </ligand>
</feature>
<dbReference type="EC" id="2.7.1.23" evidence="1"/>
<dbReference type="EMBL" id="AE016826">
    <property type="protein sequence ID" value="AAO26907.1"/>
    <property type="molecule type" value="Genomic_DNA"/>
</dbReference>
<dbReference type="RefSeq" id="WP_011091308.1">
    <property type="nucleotide sequence ID" value="NC_004545.1"/>
</dbReference>
<dbReference type="SMR" id="Q89AR9"/>
<dbReference type="STRING" id="224915.bbp_174"/>
<dbReference type="KEGG" id="bab:bbp_174"/>
<dbReference type="eggNOG" id="COG0061">
    <property type="taxonomic scope" value="Bacteria"/>
</dbReference>
<dbReference type="HOGENOM" id="CLU_008831_0_1_6"/>
<dbReference type="OrthoDB" id="9774737at2"/>
<dbReference type="Proteomes" id="UP000000601">
    <property type="component" value="Chromosome"/>
</dbReference>
<dbReference type="GO" id="GO:0005737">
    <property type="term" value="C:cytoplasm"/>
    <property type="evidence" value="ECO:0007669"/>
    <property type="project" value="UniProtKB-SubCell"/>
</dbReference>
<dbReference type="GO" id="GO:0005524">
    <property type="term" value="F:ATP binding"/>
    <property type="evidence" value="ECO:0007669"/>
    <property type="project" value="UniProtKB-KW"/>
</dbReference>
<dbReference type="GO" id="GO:0046872">
    <property type="term" value="F:metal ion binding"/>
    <property type="evidence" value="ECO:0007669"/>
    <property type="project" value="UniProtKB-UniRule"/>
</dbReference>
<dbReference type="GO" id="GO:0051287">
    <property type="term" value="F:NAD binding"/>
    <property type="evidence" value="ECO:0007669"/>
    <property type="project" value="UniProtKB-ARBA"/>
</dbReference>
<dbReference type="GO" id="GO:0003951">
    <property type="term" value="F:NAD+ kinase activity"/>
    <property type="evidence" value="ECO:0007669"/>
    <property type="project" value="UniProtKB-UniRule"/>
</dbReference>
<dbReference type="GO" id="GO:0019674">
    <property type="term" value="P:NAD metabolic process"/>
    <property type="evidence" value="ECO:0007669"/>
    <property type="project" value="InterPro"/>
</dbReference>
<dbReference type="GO" id="GO:0006741">
    <property type="term" value="P:NADP biosynthetic process"/>
    <property type="evidence" value="ECO:0007669"/>
    <property type="project" value="UniProtKB-UniRule"/>
</dbReference>
<dbReference type="Gene3D" id="3.40.50.10330">
    <property type="entry name" value="Probable inorganic polyphosphate/atp-NAD kinase, domain 1"/>
    <property type="match status" value="1"/>
</dbReference>
<dbReference type="Gene3D" id="2.60.200.30">
    <property type="entry name" value="Probable inorganic polyphosphate/atp-NAD kinase, domain 2"/>
    <property type="match status" value="1"/>
</dbReference>
<dbReference type="HAMAP" id="MF_00361">
    <property type="entry name" value="NAD_kinase"/>
    <property type="match status" value="1"/>
</dbReference>
<dbReference type="InterPro" id="IPR017438">
    <property type="entry name" value="ATP-NAD_kinase_N"/>
</dbReference>
<dbReference type="InterPro" id="IPR017437">
    <property type="entry name" value="ATP-NAD_kinase_PpnK-typ_C"/>
</dbReference>
<dbReference type="InterPro" id="IPR016064">
    <property type="entry name" value="NAD/diacylglycerol_kinase_sf"/>
</dbReference>
<dbReference type="InterPro" id="IPR002504">
    <property type="entry name" value="NADK"/>
</dbReference>
<dbReference type="NCBIfam" id="NF002306">
    <property type="entry name" value="PRK01231.1"/>
    <property type="match status" value="1"/>
</dbReference>
<dbReference type="NCBIfam" id="NF002893">
    <property type="entry name" value="PRK03378.1"/>
    <property type="match status" value="1"/>
</dbReference>
<dbReference type="PANTHER" id="PTHR20275">
    <property type="entry name" value="NAD KINASE"/>
    <property type="match status" value="1"/>
</dbReference>
<dbReference type="PANTHER" id="PTHR20275:SF0">
    <property type="entry name" value="NAD KINASE"/>
    <property type="match status" value="1"/>
</dbReference>
<dbReference type="Pfam" id="PF01513">
    <property type="entry name" value="NAD_kinase"/>
    <property type="match status" value="1"/>
</dbReference>
<dbReference type="Pfam" id="PF20143">
    <property type="entry name" value="NAD_kinase_C"/>
    <property type="match status" value="1"/>
</dbReference>
<dbReference type="SUPFAM" id="SSF111331">
    <property type="entry name" value="NAD kinase/diacylglycerol kinase-like"/>
    <property type="match status" value="1"/>
</dbReference>
<reference key="1">
    <citation type="journal article" date="2003" name="Proc. Natl. Acad. Sci. U.S.A.">
        <title>Reductive genome evolution in Buchnera aphidicola.</title>
        <authorList>
            <person name="van Ham R.C.H.J."/>
            <person name="Kamerbeek J."/>
            <person name="Palacios C."/>
            <person name="Rausell C."/>
            <person name="Abascal F."/>
            <person name="Bastolla U."/>
            <person name="Fernandez J.M."/>
            <person name="Jimenez L."/>
            <person name="Postigo M."/>
            <person name="Silva F.J."/>
            <person name="Tamames J."/>
            <person name="Viguera E."/>
            <person name="Latorre A."/>
            <person name="Valencia A."/>
            <person name="Moran F."/>
            <person name="Moya A."/>
        </authorList>
    </citation>
    <scope>NUCLEOTIDE SEQUENCE [LARGE SCALE GENOMIC DNA]</scope>
    <source>
        <strain>Bp</strain>
    </source>
</reference>
<proteinExistence type="inferred from homology"/>
<sequence length="292" mass="32739">MKYYFSSIGIVGHPRYDSALNTHKLLHSWLVNKGYNVIIENKVAHKLRLKNINFDSLANIGKKCDLAIVVGGDGNMLCAARILSCYNIKIIGINRGNLGFLTDLNPDTAFQQLYNVLSGEYFIEKRFLLEVKIVKENGTALINTAINEVVLHAGHVAHMIDFEVYINNEFAFSQRSDGLIISTPTGSTGYSLSAGGPILVSSLEAMVLIPMFPHTLSSRPLVINSTSIVYLKFKKHIHSELKISCDSQVILPLNSKDNIFVKKSKKFLCLLHPKNYNYFNVLSSKLNWSKRF</sequence>
<comment type="function">
    <text evidence="1">Involved in the regulation of the intracellular balance of NAD and NADP, and is a key enzyme in the biosynthesis of NADP. Catalyzes specifically the phosphorylation on 2'-hydroxyl of the adenosine moiety of NAD to yield NADP.</text>
</comment>
<comment type="catalytic activity">
    <reaction evidence="1">
        <text>NAD(+) + ATP = ADP + NADP(+) + H(+)</text>
        <dbReference type="Rhea" id="RHEA:18629"/>
        <dbReference type="ChEBI" id="CHEBI:15378"/>
        <dbReference type="ChEBI" id="CHEBI:30616"/>
        <dbReference type="ChEBI" id="CHEBI:57540"/>
        <dbReference type="ChEBI" id="CHEBI:58349"/>
        <dbReference type="ChEBI" id="CHEBI:456216"/>
        <dbReference type="EC" id="2.7.1.23"/>
    </reaction>
</comment>
<comment type="cofactor">
    <cofactor evidence="1">
        <name>a divalent metal cation</name>
        <dbReference type="ChEBI" id="CHEBI:60240"/>
    </cofactor>
</comment>
<comment type="subcellular location">
    <subcellularLocation>
        <location evidence="1">Cytoplasm</location>
    </subcellularLocation>
</comment>
<comment type="similarity">
    <text evidence="1">Belongs to the NAD kinase family.</text>
</comment>
<accession>Q89AR9</accession>
<organism>
    <name type="scientific">Buchnera aphidicola subsp. Baizongia pistaciae (strain Bp)</name>
    <dbReference type="NCBI Taxonomy" id="224915"/>
    <lineage>
        <taxon>Bacteria</taxon>
        <taxon>Pseudomonadati</taxon>
        <taxon>Pseudomonadota</taxon>
        <taxon>Gammaproteobacteria</taxon>
        <taxon>Enterobacterales</taxon>
        <taxon>Erwiniaceae</taxon>
        <taxon>Buchnera</taxon>
    </lineage>
</organism>
<keyword id="KW-0067">ATP-binding</keyword>
<keyword id="KW-0963">Cytoplasm</keyword>
<keyword id="KW-0418">Kinase</keyword>
<keyword id="KW-0520">NAD</keyword>
<keyword id="KW-0521">NADP</keyword>
<keyword id="KW-0547">Nucleotide-binding</keyword>
<keyword id="KW-1185">Reference proteome</keyword>
<keyword id="KW-0808">Transferase</keyword>
<protein>
    <recommendedName>
        <fullName evidence="1">NAD kinase</fullName>
        <ecNumber evidence="1">2.7.1.23</ecNumber>
    </recommendedName>
    <alternativeName>
        <fullName evidence="1">ATP-dependent NAD kinase</fullName>
    </alternativeName>
</protein>
<evidence type="ECO:0000255" key="1">
    <source>
        <dbReference type="HAMAP-Rule" id="MF_00361"/>
    </source>
</evidence>
<name>NADK_BUCBP</name>